<accession>B7HMC9</accession>
<sequence>MNHATSELHDESAVTSVPETTRLQDLKALVKMGIVNSNTLTVFTGFWLALHFNGLSVMDNLDKLFFTIVGSGLVMAGVCCLNNYIDRDIDPLMERTKTRPTVTGKYKPGFALTFGLVILLLGFVFLLLTTPMAVLMGFIGAFTYVVLYSLWTKRKYTLNTVVGSISGAVPPLIGWAAIDPSLGHPIAWMLFLIMFIWQIPHFLALAMKRVDEYRNAGIPMLPVVHGFEITKRQIMIWTVCLLPLPFYMSGLGITFMVIATLLNIGWIVLGFYGFRKKDDIKWSVQMFVYSLNYLTILFVSMIVVTFF</sequence>
<feature type="chain" id="PRO_1000199640" description="Protoheme IX farnesyltransferase">
    <location>
        <begin position="1"/>
        <end position="307"/>
    </location>
</feature>
<feature type="transmembrane region" description="Helical" evidence="1">
    <location>
        <begin position="32"/>
        <end position="52"/>
    </location>
</feature>
<feature type="transmembrane region" description="Helical" evidence="1">
    <location>
        <begin position="65"/>
        <end position="85"/>
    </location>
</feature>
<feature type="transmembrane region" description="Helical" evidence="1">
    <location>
        <begin position="108"/>
        <end position="128"/>
    </location>
</feature>
<feature type="transmembrane region" description="Helical" evidence="1">
    <location>
        <begin position="131"/>
        <end position="151"/>
    </location>
</feature>
<feature type="transmembrane region" description="Helical" evidence="1">
    <location>
        <begin position="158"/>
        <end position="178"/>
    </location>
</feature>
<feature type="transmembrane region" description="Helical" evidence="1">
    <location>
        <begin position="186"/>
        <end position="206"/>
    </location>
</feature>
<feature type="transmembrane region" description="Helical" evidence="1">
    <location>
        <begin position="251"/>
        <end position="271"/>
    </location>
</feature>
<feature type="transmembrane region" description="Helical" evidence="1">
    <location>
        <begin position="287"/>
        <end position="307"/>
    </location>
</feature>
<keyword id="KW-1003">Cell membrane</keyword>
<keyword id="KW-0350">Heme biosynthesis</keyword>
<keyword id="KW-0472">Membrane</keyword>
<keyword id="KW-0808">Transferase</keyword>
<keyword id="KW-0812">Transmembrane</keyword>
<keyword id="KW-1133">Transmembrane helix</keyword>
<proteinExistence type="inferred from homology"/>
<evidence type="ECO:0000255" key="1">
    <source>
        <dbReference type="HAMAP-Rule" id="MF_00154"/>
    </source>
</evidence>
<gene>
    <name evidence="1" type="primary">ctaB</name>
    <name type="ordered locus">BCAH187_A4063</name>
</gene>
<protein>
    <recommendedName>
        <fullName evidence="1">Protoheme IX farnesyltransferase</fullName>
        <ecNumber evidence="1">2.5.1.141</ecNumber>
    </recommendedName>
    <alternativeName>
        <fullName evidence="1">Heme B farnesyltransferase</fullName>
    </alternativeName>
    <alternativeName>
        <fullName evidence="1">Heme O synthase</fullName>
    </alternativeName>
</protein>
<reference key="1">
    <citation type="submission" date="2008-10" db="EMBL/GenBank/DDBJ databases">
        <title>Genome sequence of Bacillus cereus AH187.</title>
        <authorList>
            <person name="Dodson R.J."/>
            <person name="Durkin A.S."/>
            <person name="Rosovitz M.J."/>
            <person name="Rasko D.A."/>
            <person name="Kolsto A.B."/>
            <person name="Okstad O.A."/>
            <person name="Ravel J."/>
            <person name="Sutton G."/>
        </authorList>
    </citation>
    <scope>NUCLEOTIDE SEQUENCE [LARGE SCALE GENOMIC DNA]</scope>
    <source>
        <strain>AH187</strain>
    </source>
</reference>
<dbReference type="EC" id="2.5.1.141" evidence="1"/>
<dbReference type="EMBL" id="CP001177">
    <property type="protein sequence ID" value="ACJ78648.1"/>
    <property type="molecule type" value="Genomic_DNA"/>
</dbReference>
<dbReference type="SMR" id="B7HMC9"/>
<dbReference type="KEGG" id="bcr:BCAH187_A4063"/>
<dbReference type="HOGENOM" id="CLU_029631_0_0_9"/>
<dbReference type="UniPathway" id="UPA00834">
    <property type="reaction ID" value="UER00712"/>
</dbReference>
<dbReference type="Proteomes" id="UP000002214">
    <property type="component" value="Chromosome"/>
</dbReference>
<dbReference type="GO" id="GO:0005886">
    <property type="term" value="C:plasma membrane"/>
    <property type="evidence" value="ECO:0007669"/>
    <property type="project" value="UniProtKB-SubCell"/>
</dbReference>
<dbReference type="GO" id="GO:0008495">
    <property type="term" value="F:protoheme IX farnesyltransferase activity"/>
    <property type="evidence" value="ECO:0007669"/>
    <property type="project" value="UniProtKB-UniRule"/>
</dbReference>
<dbReference type="GO" id="GO:0048034">
    <property type="term" value="P:heme O biosynthetic process"/>
    <property type="evidence" value="ECO:0007669"/>
    <property type="project" value="UniProtKB-UniRule"/>
</dbReference>
<dbReference type="CDD" id="cd13957">
    <property type="entry name" value="PT_UbiA_Cox10"/>
    <property type="match status" value="1"/>
</dbReference>
<dbReference type="FunFam" id="1.10.357.140:FF:000001">
    <property type="entry name" value="Protoheme IX farnesyltransferase"/>
    <property type="match status" value="1"/>
</dbReference>
<dbReference type="Gene3D" id="1.10.357.140">
    <property type="entry name" value="UbiA prenyltransferase"/>
    <property type="match status" value="1"/>
</dbReference>
<dbReference type="HAMAP" id="MF_00154">
    <property type="entry name" value="CyoE_CtaB"/>
    <property type="match status" value="1"/>
</dbReference>
<dbReference type="InterPro" id="IPR006369">
    <property type="entry name" value="Protohaem_IX_farnesylTrfase"/>
</dbReference>
<dbReference type="InterPro" id="IPR000537">
    <property type="entry name" value="UbiA_prenyltransferase"/>
</dbReference>
<dbReference type="InterPro" id="IPR030470">
    <property type="entry name" value="UbiA_prenylTrfase_CS"/>
</dbReference>
<dbReference type="InterPro" id="IPR044878">
    <property type="entry name" value="UbiA_sf"/>
</dbReference>
<dbReference type="NCBIfam" id="TIGR01473">
    <property type="entry name" value="cyoE_ctaB"/>
    <property type="match status" value="1"/>
</dbReference>
<dbReference type="PANTHER" id="PTHR43448">
    <property type="entry name" value="PROTOHEME IX FARNESYLTRANSFERASE, MITOCHONDRIAL"/>
    <property type="match status" value="1"/>
</dbReference>
<dbReference type="PANTHER" id="PTHR43448:SF2">
    <property type="entry name" value="PROTOHEME IX FARNESYLTRANSFERASE, MITOCHONDRIAL"/>
    <property type="match status" value="1"/>
</dbReference>
<dbReference type="Pfam" id="PF01040">
    <property type="entry name" value="UbiA"/>
    <property type="match status" value="1"/>
</dbReference>
<dbReference type="PROSITE" id="PS00943">
    <property type="entry name" value="UBIA"/>
    <property type="match status" value="1"/>
</dbReference>
<comment type="function">
    <text evidence="1">Converts heme B (protoheme IX) to heme O by substitution of the vinyl group on carbon 2 of heme B porphyrin ring with a hydroxyethyl farnesyl side group.</text>
</comment>
<comment type="catalytic activity">
    <reaction evidence="1">
        <text>heme b + (2E,6E)-farnesyl diphosphate + H2O = Fe(II)-heme o + diphosphate</text>
        <dbReference type="Rhea" id="RHEA:28070"/>
        <dbReference type="ChEBI" id="CHEBI:15377"/>
        <dbReference type="ChEBI" id="CHEBI:33019"/>
        <dbReference type="ChEBI" id="CHEBI:60344"/>
        <dbReference type="ChEBI" id="CHEBI:60530"/>
        <dbReference type="ChEBI" id="CHEBI:175763"/>
        <dbReference type="EC" id="2.5.1.141"/>
    </reaction>
</comment>
<comment type="pathway">
    <text evidence="1">Porphyrin-containing compound metabolism; heme O biosynthesis; heme O from protoheme: step 1/1.</text>
</comment>
<comment type="subunit">
    <text evidence="1">Interacts with CtaA.</text>
</comment>
<comment type="subcellular location">
    <subcellularLocation>
        <location evidence="1">Cell membrane</location>
        <topology evidence="1">Multi-pass membrane protein</topology>
    </subcellularLocation>
</comment>
<comment type="miscellaneous">
    <text evidence="1">Carbon 2 of the heme B porphyrin ring is defined according to the Fischer nomenclature.</text>
</comment>
<comment type="similarity">
    <text evidence="1">Belongs to the UbiA prenyltransferase family. Protoheme IX farnesyltransferase subfamily.</text>
</comment>
<organism>
    <name type="scientific">Bacillus cereus (strain AH187)</name>
    <dbReference type="NCBI Taxonomy" id="405534"/>
    <lineage>
        <taxon>Bacteria</taxon>
        <taxon>Bacillati</taxon>
        <taxon>Bacillota</taxon>
        <taxon>Bacilli</taxon>
        <taxon>Bacillales</taxon>
        <taxon>Bacillaceae</taxon>
        <taxon>Bacillus</taxon>
        <taxon>Bacillus cereus group</taxon>
    </lineage>
</organism>
<name>COXX_BACC7</name>